<name>CONO_CONGA</name>
<accession>P84700</accession>
<evidence type="ECO:0000269" key="1">
    <source>
    </source>
</evidence>
<evidence type="ECO:0000303" key="2">
    <source>
    </source>
</evidence>
<evidence type="ECO:0000305" key="3"/>
<reference key="1">
    <citation type="journal article" date="2005" name="J. Am. Chem. Soc.">
        <title>Polypeptide chains containing D-gamma-hydroxyvaline.</title>
        <authorList>
            <person name="Pisarewicz K."/>
            <person name="Mora D."/>
            <person name="Pflueger F.C."/>
            <person name="Fields G.B."/>
            <person name="Mari F."/>
        </authorList>
    </citation>
    <scope>PROTEIN SEQUENCE</scope>
    <scope>SUBCELLULAR LOCATION</scope>
    <scope>TISSUE SPECIFICITY</scope>
    <scope>HYDROXYLATION AT PRO-2 AND VAL-6</scope>
    <scope>D-AMINO ACID AT VAL-6</scope>
    <scope>MASS SPECTROMETRY</scope>
    <source>
        <tissue>Venom</tissue>
    </source>
</reference>
<comment type="function">
    <text>May act as a neurotoxin.</text>
</comment>
<comment type="subcellular location">
    <subcellularLocation>
        <location evidence="1">Secreted</location>
    </subcellularLocation>
</comment>
<comment type="tissue specificity">
    <text evidence="1">Expressed by the venom duct.</text>
</comment>
<comment type="PTM">
    <text evidence="1">Occurs in 2 forms which differ in the post-translational modification of Val-6. In the form conophan gld-V, Val-6 is D-valine. In the form gamma-hydroxyconophan gld-V*, Val-6 is D-4-hydroxyvaline. Both diastereomeric forms of D-hydroxyvaline may be produced.</text>
</comment>
<comment type="mass spectrometry" mass="847.3" error="0.1" method="Electrospray" evidence="1">
    <text>Form conophan gld-V.</text>
</comment>
<comment type="mass spectrometry" mass="863.3" error="0.1" method="Electrospray" evidence="1">
    <text>Form gamma-hydroxyconophan gld-V*.</text>
</comment>
<comment type="miscellaneous">
    <text evidence="3">The mature peptide does not contain cysteine residue.</text>
</comment>
<comment type="similarity">
    <text evidence="3">Belongs to the conophan family.</text>
</comment>
<protein>
    <recommendedName>
        <fullName evidence="2">Conophan gld-V</fullName>
    </recommendedName>
    <alternativeName>
        <fullName evidence="2">Gamma-hydroxyconophan gld-V*</fullName>
    </alternativeName>
</protein>
<keyword id="KW-0208">D-amino acid</keyword>
<keyword id="KW-0903">Direct protein sequencing</keyword>
<keyword id="KW-0379">Hydroxylation</keyword>
<keyword id="KW-0528">Neurotoxin</keyword>
<keyword id="KW-0964">Secreted</keyword>
<keyword id="KW-0800">Toxin</keyword>
<feature type="peptide" id="PRO_0000044124" description="Conophan gld-V" evidence="1">
    <location>
        <begin position="1"/>
        <end position="8"/>
    </location>
</feature>
<feature type="modified residue" description="4-hydroxyproline" evidence="1">
    <location>
        <position position="2"/>
    </location>
</feature>
<feature type="modified residue" description="D-4-hydroxyvaline; in form gamma-hydroxyconophan gld-V*" evidence="1">
    <location>
        <position position="6"/>
    </location>
</feature>
<feature type="modified residue" description="D-valine; in form conophan gld-V" evidence="1">
    <location>
        <position position="6"/>
    </location>
</feature>
<dbReference type="ConoServer" id="2724">
    <property type="toxin name" value="Conophan-gld-V"/>
</dbReference>
<dbReference type="GO" id="GO:0005576">
    <property type="term" value="C:extracellular region"/>
    <property type="evidence" value="ECO:0000314"/>
    <property type="project" value="UniProtKB"/>
</dbReference>
<dbReference type="GO" id="GO:0090729">
    <property type="term" value="F:toxin activity"/>
    <property type="evidence" value="ECO:0007669"/>
    <property type="project" value="UniProtKB-KW"/>
</dbReference>
<proteinExistence type="evidence at protein level"/>
<organism>
    <name type="scientific">Conus gladiator</name>
    <name type="common">Gladiator cone</name>
    <dbReference type="NCBI Taxonomy" id="257327"/>
    <lineage>
        <taxon>Eukaryota</taxon>
        <taxon>Metazoa</taxon>
        <taxon>Spiralia</taxon>
        <taxon>Lophotrochozoa</taxon>
        <taxon>Mollusca</taxon>
        <taxon>Gastropoda</taxon>
        <taxon>Caenogastropoda</taxon>
        <taxon>Neogastropoda</taxon>
        <taxon>Conoidea</taxon>
        <taxon>Conidae</taxon>
        <taxon>Conus</taxon>
        <taxon>Monteiroconus</taxon>
    </lineage>
</organism>
<sequence length="8" mass="831">APANSVWS</sequence>